<sequence length="93" mass="10269">MKKTLMLLAMVVALVILPFFINHGGEYGGSDGEAESQIQAIAPQYKPWFQPLYEPASGEIESLLFTLQGSLGAAVIFYILGYCKGKQRRDDRA</sequence>
<organism>
    <name type="scientific">Salmonella enteritidis PT4 (strain P125109)</name>
    <dbReference type="NCBI Taxonomy" id="550537"/>
    <lineage>
        <taxon>Bacteria</taxon>
        <taxon>Pseudomonadati</taxon>
        <taxon>Pseudomonadota</taxon>
        <taxon>Gammaproteobacteria</taxon>
        <taxon>Enterobacterales</taxon>
        <taxon>Enterobacteriaceae</taxon>
        <taxon>Salmonella</taxon>
    </lineage>
</organism>
<keyword id="KW-0997">Cell inner membrane</keyword>
<keyword id="KW-1003">Cell membrane</keyword>
<keyword id="KW-0169">Cobalamin biosynthesis</keyword>
<keyword id="KW-0170">Cobalt</keyword>
<keyword id="KW-0171">Cobalt transport</keyword>
<keyword id="KW-0406">Ion transport</keyword>
<keyword id="KW-0472">Membrane</keyword>
<keyword id="KW-0812">Transmembrane</keyword>
<keyword id="KW-1133">Transmembrane helix</keyword>
<keyword id="KW-0813">Transport</keyword>
<name>CBIN_SALEP</name>
<proteinExistence type="inferred from homology"/>
<reference key="1">
    <citation type="journal article" date="2008" name="Genome Res.">
        <title>Comparative genome analysis of Salmonella enteritidis PT4 and Salmonella gallinarum 287/91 provides insights into evolutionary and host adaptation pathways.</title>
        <authorList>
            <person name="Thomson N.R."/>
            <person name="Clayton D.J."/>
            <person name="Windhorst D."/>
            <person name="Vernikos G."/>
            <person name="Davidson S."/>
            <person name="Churcher C."/>
            <person name="Quail M.A."/>
            <person name="Stevens M."/>
            <person name="Jones M.A."/>
            <person name="Watson M."/>
            <person name="Barron A."/>
            <person name="Layton A."/>
            <person name="Pickard D."/>
            <person name="Kingsley R.A."/>
            <person name="Bignell A."/>
            <person name="Clark L."/>
            <person name="Harris B."/>
            <person name="Ormond D."/>
            <person name="Abdellah Z."/>
            <person name="Brooks K."/>
            <person name="Cherevach I."/>
            <person name="Chillingworth T."/>
            <person name="Woodward J."/>
            <person name="Norberczak H."/>
            <person name="Lord A."/>
            <person name="Arrowsmith C."/>
            <person name="Jagels K."/>
            <person name="Moule S."/>
            <person name="Mungall K."/>
            <person name="Saunders M."/>
            <person name="Whitehead S."/>
            <person name="Chabalgoity J.A."/>
            <person name="Maskell D."/>
            <person name="Humphreys T."/>
            <person name="Roberts M."/>
            <person name="Barrow P.A."/>
            <person name="Dougan G."/>
            <person name="Parkhill J."/>
        </authorList>
    </citation>
    <scope>NUCLEOTIDE SEQUENCE [LARGE SCALE GENOMIC DNA]</scope>
    <source>
        <strain>P125109</strain>
    </source>
</reference>
<comment type="function">
    <text evidence="1">Part of the energy-coupling factor (ECF) transporter complex CbiMNOQ involved in cobalt import.</text>
</comment>
<comment type="pathway">
    <text evidence="1">Cofactor biosynthesis; adenosylcobalamin biosynthesis.</text>
</comment>
<comment type="subunit">
    <text evidence="1">Forms an energy-coupling factor (ECF) transporter complex composed of an ATP-binding protein (A component, CbiO), a transmembrane protein (T component, CbiQ) and 2 possible substrate-capture proteins (S components, CbiM and CbiN) of unknown stoichimetry.</text>
</comment>
<comment type="subcellular location">
    <subcellularLocation>
        <location evidence="1">Cell inner membrane</location>
        <topology evidence="1">Multi-pass membrane protein</topology>
    </subcellularLocation>
</comment>
<comment type="similarity">
    <text evidence="1">Belongs to the CbiN family.</text>
</comment>
<accession>B5QYX9</accession>
<dbReference type="EMBL" id="AM933172">
    <property type="protein sequence ID" value="CAR33600.1"/>
    <property type="molecule type" value="Genomic_DNA"/>
</dbReference>
<dbReference type="RefSeq" id="WP_000753212.1">
    <property type="nucleotide sequence ID" value="NC_011294.1"/>
</dbReference>
<dbReference type="KEGG" id="set:SEN2020"/>
<dbReference type="HOGENOM" id="CLU_136197_2_0_6"/>
<dbReference type="UniPathway" id="UPA00148"/>
<dbReference type="Proteomes" id="UP000000613">
    <property type="component" value="Chromosome"/>
</dbReference>
<dbReference type="GO" id="GO:0005886">
    <property type="term" value="C:plasma membrane"/>
    <property type="evidence" value="ECO:0007669"/>
    <property type="project" value="UniProtKB-SubCell"/>
</dbReference>
<dbReference type="GO" id="GO:0015087">
    <property type="term" value="F:cobalt ion transmembrane transporter activity"/>
    <property type="evidence" value="ECO:0007669"/>
    <property type="project" value="UniProtKB-UniRule"/>
</dbReference>
<dbReference type="GO" id="GO:0009236">
    <property type="term" value="P:cobalamin biosynthetic process"/>
    <property type="evidence" value="ECO:0007669"/>
    <property type="project" value="UniProtKB-UniRule"/>
</dbReference>
<dbReference type="HAMAP" id="MF_00330">
    <property type="entry name" value="CbiN"/>
    <property type="match status" value="1"/>
</dbReference>
<dbReference type="InterPro" id="IPR003705">
    <property type="entry name" value="CbiN"/>
</dbReference>
<dbReference type="NCBIfam" id="TIGR01165">
    <property type="entry name" value="cbiN"/>
    <property type="match status" value="1"/>
</dbReference>
<dbReference type="NCBIfam" id="NF002780">
    <property type="entry name" value="PRK02898.1"/>
    <property type="match status" value="1"/>
</dbReference>
<dbReference type="PANTHER" id="PTHR38662">
    <property type="entry name" value="COBALT TRANSPORT PROTEIN CBIN"/>
    <property type="match status" value="1"/>
</dbReference>
<dbReference type="PANTHER" id="PTHR38662:SF1">
    <property type="entry name" value="COBALT TRANSPORT PROTEIN CBIN"/>
    <property type="match status" value="1"/>
</dbReference>
<dbReference type="Pfam" id="PF02553">
    <property type="entry name" value="CbiN"/>
    <property type="match status" value="1"/>
</dbReference>
<protein>
    <recommendedName>
        <fullName evidence="1">Cobalt transport protein CbiN</fullName>
    </recommendedName>
    <alternativeName>
        <fullName evidence="1">Energy-coupling factor transporter probable substrate-capture protein CbiN</fullName>
        <shortName evidence="1">ECF transporter S component CbiN</shortName>
    </alternativeName>
</protein>
<feature type="chain" id="PRO_1000116111" description="Cobalt transport protein CbiN">
    <location>
        <begin position="1"/>
        <end position="93"/>
    </location>
</feature>
<feature type="transmembrane region" description="Helical" evidence="1">
    <location>
        <begin position="5"/>
        <end position="25"/>
    </location>
</feature>
<feature type="transmembrane region" description="Helical" evidence="1">
    <location>
        <begin position="63"/>
        <end position="83"/>
    </location>
</feature>
<evidence type="ECO:0000255" key="1">
    <source>
        <dbReference type="HAMAP-Rule" id="MF_00330"/>
    </source>
</evidence>
<gene>
    <name evidence="1" type="primary">cbiN</name>
    <name type="ordered locus">SEN2020</name>
</gene>